<reference key="1">
    <citation type="submission" date="2007-07" db="EMBL/GenBank/DDBJ databases">
        <authorList>
            <consortium name="NIH - Mammalian Gene Collection (MGC) project"/>
        </authorList>
    </citation>
    <scope>NUCLEOTIDE SEQUENCE [LARGE SCALE MRNA]</scope>
    <source>
        <strain>Hereford</strain>
        <tissue>Hypothalamus</tissue>
    </source>
</reference>
<proteinExistence type="evidence at transcript level"/>
<dbReference type="EC" id="6.1.1.3" evidence="2"/>
<dbReference type="EMBL" id="BC148906">
    <property type="protein sequence ID" value="AAI48907.1"/>
    <property type="molecule type" value="mRNA"/>
</dbReference>
<dbReference type="RefSeq" id="NP_001095559.1">
    <property type="nucleotide sequence ID" value="NM_001102089.2"/>
</dbReference>
<dbReference type="SMR" id="A6QNM8"/>
<dbReference type="FunCoup" id="A6QNM8">
    <property type="interactions" value="937"/>
</dbReference>
<dbReference type="STRING" id="9913.ENSBTAP00000062092"/>
<dbReference type="PaxDb" id="9913-ENSBTAP00000047958"/>
<dbReference type="Ensembl" id="ENSBTAT00000052449.2">
    <property type="protein sequence ID" value="ENSBTAP00000047958.1"/>
    <property type="gene ID" value="ENSBTAG00000007651.7"/>
</dbReference>
<dbReference type="GeneID" id="525350"/>
<dbReference type="KEGG" id="bta:525350"/>
<dbReference type="CTD" id="123283"/>
<dbReference type="VEuPathDB" id="HostDB:ENSBTAG00000007651"/>
<dbReference type="VGNC" id="VGNC:35606">
    <property type="gene designation" value="TARS3"/>
</dbReference>
<dbReference type="eggNOG" id="KOG1637">
    <property type="taxonomic scope" value="Eukaryota"/>
</dbReference>
<dbReference type="GeneTree" id="ENSGT00940000159348"/>
<dbReference type="HOGENOM" id="CLU_008554_0_1_1"/>
<dbReference type="InParanoid" id="A6QNM8"/>
<dbReference type="OrthoDB" id="5423599at2759"/>
<dbReference type="TreeFam" id="TF300858"/>
<dbReference type="Proteomes" id="UP000009136">
    <property type="component" value="Chromosome 21"/>
</dbReference>
<dbReference type="Bgee" id="ENSBTAG00000007651">
    <property type="expression patterns" value="Expressed in occipital lobe and 100 other cell types or tissues"/>
</dbReference>
<dbReference type="GO" id="GO:0005737">
    <property type="term" value="C:cytoplasm"/>
    <property type="evidence" value="ECO:0000250"/>
    <property type="project" value="UniProtKB"/>
</dbReference>
<dbReference type="GO" id="GO:0005739">
    <property type="term" value="C:mitochondrion"/>
    <property type="evidence" value="ECO:0000318"/>
    <property type="project" value="GO_Central"/>
</dbReference>
<dbReference type="GO" id="GO:0005634">
    <property type="term" value="C:nucleus"/>
    <property type="evidence" value="ECO:0000250"/>
    <property type="project" value="UniProtKB"/>
</dbReference>
<dbReference type="GO" id="GO:0005524">
    <property type="term" value="F:ATP binding"/>
    <property type="evidence" value="ECO:0007669"/>
    <property type="project" value="UniProtKB-KW"/>
</dbReference>
<dbReference type="GO" id="GO:0004829">
    <property type="term" value="F:threonine-tRNA ligase activity"/>
    <property type="evidence" value="ECO:0000250"/>
    <property type="project" value="UniProtKB"/>
</dbReference>
<dbReference type="GO" id="GO:0006435">
    <property type="term" value="P:threonyl-tRNA aminoacylation"/>
    <property type="evidence" value="ECO:0000250"/>
    <property type="project" value="UniProtKB"/>
</dbReference>
<dbReference type="CDD" id="cd01667">
    <property type="entry name" value="TGS_ThrRS"/>
    <property type="match status" value="1"/>
</dbReference>
<dbReference type="CDD" id="cd00771">
    <property type="entry name" value="ThrRS_core"/>
    <property type="match status" value="1"/>
</dbReference>
<dbReference type="FunFam" id="3.30.930.10:FF:000009">
    <property type="entry name" value="Threonine--tRNA ligase 2, cytoplasmic"/>
    <property type="match status" value="1"/>
</dbReference>
<dbReference type="FunFam" id="3.40.50.800:FF:000078">
    <property type="entry name" value="Threonine--tRNA ligase 2, cytoplasmic"/>
    <property type="match status" value="1"/>
</dbReference>
<dbReference type="FunFam" id="3.10.20.30:FF:000006">
    <property type="entry name" value="Threonine--tRNA ligase, cytoplasmic"/>
    <property type="match status" value="1"/>
</dbReference>
<dbReference type="FunFam" id="3.30.980.10:FF:000003">
    <property type="entry name" value="Threonine--tRNA ligase, cytoplasmic"/>
    <property type="match status" value="1"/>
</dbReference>
<dbReference type="Gene3D" id="3.10.20.30">
    <property type="match status" value="1"/>
</dbReference>
<dbReference type="Gene3D" id="3.40.50.800">
    <property type="entry name" value="Anticodon-binding domain"/>
    <property type="match status" value="1"/>
</dbReference>
<dbReference type="Gene3D" id="3.30.930.10">
    <property type="entry name" value="Bira Bifunctional Protein, Domain 2"/>
    <property type="match status" value="1"/>
</dbReference>
<dbReference type="Gene3D" id="3.30.980.10">
    <property type="entry name" value="Threonyl-trna Synthetase, Chain A, domain 2"/>
    <property type="match status" value="1"/>
</dbReference>
<dbReference type="InterPro" id="IPR002314">
    <property type="entry name" value="aa-tRNA-synt_IIb"/>
</dbReference>
<dbReference type="InterPro" id="IPR006195">
    <property type="entry name" value="aa-tRNA-synth_II"/>
</dbReference>
<dbReference type="InterPro" id="IPR045864">
    <property type="entry name" value="aa-tRNA-synth_II/BPL/LPL"/>
</dbReference>
<dbReference type="InterPro" id="IPR036621">
    <property type="entry name" value="Anticodon-bd_dom_sf"/>
</dbReference>
<dbReference type="InterPro" id="IPR012675">
    <property type="entry name" value="Beta-grasp_dom_sf"/>
</dbReference>
<dbReference type="InterPro" id="IPR004095">
    <property type="entry name" value="TGS"/>
</dbReference>
<dbReference type="InterPro" id="IPR012676">
    <property type="entry name" value="TGS-like"/>
</dbReference>
<dbReference type="InterPro" id="IPR002320">
    <property type="entry name" value="Thr-tRNA-ligase_IIa"/>
</dbReference>
<dbReference type="InterPro" id="IPR018163">
    <property type="entry name" value="Thr/Ala-tRNA-synth_IIc_edit"/>
</dbReference>
<dbReference type="InterPro" id="IPR033728">
    <property type="entry name" value="ThrRS_core"/>
</dbReference>
<dbReference type="InterPro" id="IPR012947">
    <property type="entry name" value="tRNA_SAD"/>
</dbReference>
<dbReference type="NCBIfam" id="TIGR00418">
    <property type="entry name" value="thrS"/>
    <property type="match status" value="1"/>
</dbReference>
<dbReference type="PANTHER" id="PTHR11451:SF38">
    <property type="entry name" value="THREONINE--TRNA LIGASE 2, CYTOPLASMIC"/>
    <property type="match status" value="1"/>
</dbReference>
<dbReference type="PANTHER" id="PTHR11451">
    <property type="entry name" value="THREONINE-TRNA LIGASE"/>
    <property type="match status" value="1"/>
</dbReference>
<dbReference type="Pfam" id="PF02824">
    <property type="entry name" value="TGS"/>
    <property type="match status" value="1"/>
</dbReference>
<dbReference type="Pfam" id="PF00587">
    <property type="entry name" value="tRNA-synt_2b"/>
    <property type="match status" value="1"/>
</dbReference>
<dbReference type="Pfam" id="PF07973">
    <property type="entry name" value="tRNA_SAD"/>
    <property type="match status" value="1"/>
</dbReference>
<dbReference type="PRINTS" id="PR01047">
    <property type="entry name" value="TRNASYNTHTHR"/>
</dbReference>
<dbReference type="SMART" id="SM00863">
    <property type="entry name" value="tRNA_SAD"/>
    <property type="match status" value="1"/>
</dbReference>
<dbReference type="SUPFAM" id="SSF52954">
    <property type="entry name" value="Class II aaRS ABD-related"/>
    <property type="match status" value="1"/>
</dbReference>
<dbReference type="SUPFAM" id="SSF55681">
    <property type="entry name" value="Class II aaRS and biotin synthetases"/>
    <property type="match status" value="1"/>
</dbReference>
<dbReference type="SUPFAM" id="SSF81271">
    <property type="entry name" value="TGS-like"/>
    <property type="match status" value="1"/>
</dbReference>
<dbReference type="SUPFAM" id="SSF55186">
    <property type="entry name" value="ThrRS/AlaRS common domain"/>
    <property type="match status" value="1"/>
</dbReference>
<dbReference type="PROSITE" id="PS50862">
    <property type="entry name" value="AA_TRNA_LIGASE_II"/>
    <property type="match status" value="1"/>
</dbReference>
<dbReference type="PROSITE" id="PS51880">
    <property type="entry name" value="TGS"/>
    <property type="match status" value="1"/>
</dbReference>
<name>SYTC2_BOVIN</name>
<feature type="initiator methionine" description="Removed" evidence="1">
    <location>
        <position position="1"/>
    </location>
</feature>
<feature type="chain" id="PRO_0000333827" description="Threonine--tRNA ligase 2, cytoplasmic">
    <location>
        <begin position="2"/>
        <end position="724"/>
    </location>
</feature>
<feature type="domain" description="TGS" evidence="4">
    <location>
        <begin position="155"/>
        <end position="220"/>
    </location>
</feature>
<feature type="region of interest" description="Disordered" evidence="5">
    <location>
        <begin position="90"/>
        <end position="112"/>
    </location>
</feature>
<feature type="coiled-coil region" evidence="3">
    <location>
        <begin position="44"/>
        <end position="72"/>
    </location>
</feature>
<feature type="modified residue" description="N-acetylalanine" evidence="1">
    <location>
        <position position="2"/>
    </location>
</feature>
<feature type="modified residue" description="Phosphoserine" evidence="1">
    <location>
        <position position="451"/>
    </location>
</feature>
<keyword id="KW-0007">Acetylation</keyword>
<keyword id="KW-0030">Aminoacyl-tRNA synthetase</keyword>
<keyword id="KW-0067">ATP-binding</keyword>
<keyword id="KW-0175">Coiled coil</keyword>
<keyword id="KW-0963">Cytoplasm</keyword>
<keyword id="KW-0436">Ligase</keyword>
<keyword id="KW-0547">Nucleotide-binding</keyword>
<keyword id="KW-0539">Nucleus</keyword>
<keyword id="KW-0597">Phosphoprotein</keyword>
<keyword id="KW-0648">Protein biosynthesis</keyword>
<keyword id="KW-1185">Reference proteome</keyword>
<organism>
    <name type="scientific">Bos taurus</name>
    <name type="common">Bovine</name>
    <dbReference type="NCBI Taxonomy" id="9913"/>
    <lineage>
        <taxon>Eukaryota</taxon>
        <taxon>Metazoa</taxon>
        <taxon>Chordata</taxon>
        <taxon>Craniata</taxon>
        <taxon>Vertebrata</taxon>
        <taxon>Euteleostomi</taxon>
        <taxon>Mammalia</taxon>
        <taxon>Eutheria</taxon>
        <taxon>Laurasiatheria</taxon>
        <taxon>Artiodactyla</taxon>
        <taxon>Ruminantia</taxon>
        <taxon>Pecora</taxon>
        <taxon>Bovidae</taxon>
        <taxon>Bovinae</taxon>
        <taxon>Bos</taxon>
    </lineage>
</organism>
<evidence type="ECO:0000250" key="1">
    <source>
        <dbReference type="UniProtKB" id="A2RTX5"/>
    </source>
</evidence>
<evidence type="ECO:0000250" key="2">
    <source>
        <dbReference type="UniProtKB" id="Q8BLY2"/>
    </source>
</evidence>
<evidence type="ECO:0000255" key="3"/>
<evidence type="ECO:0000255" key="4">
    <source>
        <dbReference type="PROSITE-ProRule" id="PRU01228"/>
    </source>
</evidence>
<evidence type="ECO:0000256" key="5">
    <source>
        <dbReference type="SAM" id="MobiDB-lite"/>
    </source>
</evidence>
<evidence type="ECO:0000305" key="6"/>
<gene>
    <name type="primary">TARS3</name>
    <name type="synonym">TARSL2</name>
</gene>
<protein>
    <recommendedName>
        <fullName>Threonine--tRNA ligase 2, cytoplasmic</fullName>
        <ecNumber evidence="2">6.1.1.3</ecNumber>
    </recommendedName>
    <alternativeName>
        <fullName>Threonyl-tRNA synthetase</fullName>
        <shortName>ThrRS</shortName>
    </alternativeName>
    <alternativeName>
        <fullName>Threonyl-tRNA synthetase protein 3</fullName>
    </alternativeName>
</protein>
<comment type="function">
    <text evidence="2">Catalyzes the attachment of threonine to tRNA(Thr) in a two-step reaction: threonine is first activated by ATP to form Thr-AMP and then transferred to the acceptor end of tRNA(Thr). Also edits incorrectly charged tRNA(Thr) via its editing domain, at the post-transfer stage.</text>
</comment>
<comment type="catalytic activity">
    <reaction evidence="2">
        <text>tRNA(Thr) + L-threonine + ATP = L-threonyl-tRNA(Thr) + AMP + diphosphate + H(+)</text>
        <dbReference type="Rhea" id="RHEA:24624"/>
        <dbReference type="Rhea" id="RHEA-COMP:9670"/>
        <dbReference type="Rhea" id="RHEA-COMP:9704"/>
        <dbReference type="ChEBI" id="CHEBI:15378"/>
        <dbReference type="ChEBI" id="CHEBI:30616"/>
        <dbReference type="ChEBI" id="CHEBI:33019"/>
        <dbReference type="ChEBI" id="CHEBI:57926"/>
        <dbReference type="ChEBI" id="CHEBI:78442"/>
        <dbReference type="ChEBI" id="CHEBI:78534"/>
        <dbReference type="ChEBI" id="CHEBI:456215"/>
        <dbReference type="EC" id="6.1.1.3"/>
    </reaction>
</comment>
<comment type="subunit">
    <text evidence="1">May be a component of the multisynthetase complex (MSC), a large multi-subunit complex which contains at least eight different aminoacyl-tRNA synthetases plus three auxillary subunits AIMP1, AIMP2 and EEF1E1. Interacts with the MSC components EPRS1, AIMP1, AIMP2 and KARS1.</text>
</comment>
<comment type="subcellular location">
    <subcellularLocation>
        <location evidence="2">Cytoplasm</location>
    </subcellularLocation>
    <subcellularLocation>
        <location evidence="2">Nucleus</location>
    </subcellularLocation>
    <text evidence="2">Primarily cytoplasmic. Also detected at lower levels in the nucleus.</text>
</comment>
<comment type="similarity">
    <text evidence="6">Belongs to the class-II aminoacyl-tRNA synthetase family.</text>
</comment>
<sequence length="724" mass="83076">MAAEALAAEAVASRLARQEEDIRWLWAEVHRLRDEQLNAPDRCQAEGPCLTREVAQLRAENRELRHCLYRLRLCLAEELSHQARLESAARAEAGRAAAGAQPPPSQSLEEDVKKEIDPDNEVKNPPNFMKERLKFFEILKKDHQLLLAIYEKKGDSSNVITVRVADGRTVKGEAWKTTPYQVAAEISQELAETTVVAKVNGELWDLDRPLEGDATVELLTFEDEEARAVYWHSSAHVLGEALELHYGGLLCCSPPGDGSFHYDVYLEDRAVSSAELPVLESMCQAIIKEQQPFERLEVSTKVLLDLFKYNKFKCRILKEKVATPTTTVYRCGPLVELCKGPHVRHTGTIKVIKIFKNSLAYWADNPEMEMLQRVYGVSFPDEQRMAAWEELQEEARARDHRTIGKEQELFFFHDLSPGSCFFLPRGACIYNTLIDFIREQHHQRNFTEVLSPNMYSCKLWEASGHWQHYSENMFTFDIDKDTFALKPMNCPGHCLMFAHRPRSWREMPIRLADFGVLHRNEPSGALSGLTCVRRFQQDDAHIFCTVGQLEEEIKGCLQFLQSVYSTFGFSFQLNLSTRPENFLGKIELWDEAEKQLQNSLMEFGKPWKINPGEGAFYGPKIDLEIKDALGRYHQCATIQLDFQLPIRFNLTYVSKDGDDKKNPVIIHQAILGSVERMIAILSENYGGKWPFWLSPRQVMVIPVGPTCEKYALQWLEKRKRQIML</sequence>
<accession>A6QNM8</accession>